<comment type="function">
    <text evidence="1 11">May be involved in Ca(2+)-dependent exocytosis of secretory vesicles through Ca(2+) and phospholipid binding to the C2 domain or may serve as Ca(2+) sensors in the process of vesicular trafficking and exocytosis (By similarity). May mediate Ca(2+)-regulation of exocytosis in acrosomal reaction in sperm (PubMed:15774481).</text>
</comment>
<comment type="cofactor">
    <cofactor evidence="6">
        <name>Ca(2+)</name>
        <dbReference type="ChEBI" id="CHEBI:29108"/>
    </cofactor>
    <text evidence="3">Binds 3 Ca(2+) ions per subunit. The ions are bound to the C2 domains.</text>
</comment>
<comment type="subunit">
    <text evidence="8 9 10 11">Isoform 1: Homodimer; disulfide-linked via the cysteine motif (PubMed:10531343, PubMed:10531344). Isoform 1: Can also form heterodimers with SYT3, SYT7, SYT9 and SYT10 (PubMed:10531343, PubMed:10531344, PubMed:10871604). Isoform 1: Interacts with STX1A, STX1B and STX2; the interaction is Ca(2+)-dependent (PubMed:15774481). Isoform 2: Is not able to form homodimer and heterodimers (PubMed:10531344).</text>
</comment>
<comment type="interaction">
    <interactant intactId="EBI-5239378">
        <id>Q9R0N8</id>
    </interactant>
    <interactant intactId="EBI-5239459">
        <id>Q9R0N4</id>
        <label>Syt10</label>
    </interactant>
    <organismsDiffer>false</organismsDiffer>
    <experiments>2</experiments>
</comment>
<comment type="interaction">
    <interactant intactId="EBI-5239378">
        <id>Q9R0N8</id>
    </interactant>
    <interactant intactId="EBI-457995">
        <id>O35681</id>
        <label>Syt3</label>
    </interactant>
    <organismsDiffer>false</organismsDiffer>
    <experiments>2</experiments>
</comment>
<comment type="interaction">
    <interactant intactId="EBI-5239378">
        <id>Q9R0N8</id>
    </interactant>
    <interactant intactId="EBI-5239378">
        <id>Q9R0N8</id>
        <label>Syt6</label>
    </interactant>
    <organismsDiffer>false</organismsDiffer>
    <experiments>2</experiments>
</comment>
<comment type="interaction">
    <interactant intactId="EBI-5239378">
        <id>Q9R0N8</id>
    </interactant>
    <interactant intactId="EBI-458006">
        <id>Q9R0N9</id>
        <label>Syt9</label>
    </interactant>
    <organismsDiffer>false</organismsDiffer>
    <experiments>2</experiments>
</comment>
<comment type="subcellular location">
    <subcellularLocation>
        <location evidence="9">Cytoplasmic vesicle</location>
        <location evidence="9">Secretory vesicle</location>
        <location evidence="9">Synaptic vesicle membrane</location>
        <topology evidence="9">Single-pass membrane protein</topology>
    </subcellularLocation>
</comment>
<comment type="subcellular location">
    <molecule>Isoform 1</molecule>
    <subcellularLocation>
        <location>Membrane</location>
        <topology>Single-pass membrane protein</topology>
    </subcellularLocation>
    <text evidence="9">Localized predominantly to endoplasmic reticulum (ER) and/or Golgi-like perinuclear compartment (PubMed:10531344).</text>
</comment>
<comment type="subcellular location">
    <molecule>Isoform 2</molecule>
    <subcellularLocation>
        <location evidence="9">Cytoplasm</location>
        <location evidence="9">Cytosol</location>
    </subcellularLocation>
    <subcellularLocation>
        <location evidence="9">Cell membrane</location>
        <topology evidence="9">Peripheral membrane protein</topology>
    </subcellularLocation>
</comment>
<comment type="alternative products">
    <event type="alternative splicing"/>
    <isoform>
        <id>Q9R0N8-1</id>
        <name>1</name>
        <name>SytVI</name>
        <sequence type="displayed"/>
    </isoform>
    <isoform>
        <id>Q9R0N8-2</id>
        <name>2</name>
        <name>SytVIdeltaTM1</name>
        <sequence type="described" ref="VSP_041729"/>
    </isoform>
</comment>
<comment type="tissue specificity">
    <text evidence="9">Isoform 1 is expressed in the olfactory bulb. Isoform 2 is expressed in the brain (at protein level).</text>
</comment>
<comment type="domain">
    <text evidence="2">The cysteine motif mediates homo- or heterodimer formation via formation of disulfide bonds.</text>
</comment>
<comment type="similarity">
    <text evidence="13">Belongs to the synaptotagmin family.</text>
</comment>
<feature type="chain" id="PRO_0000183955" description="Synaptotagmin-6">
    <location>
        <begin position="1"/>
        <end position="511"/>
    </location>
</feature>
<feature type="topological domain" description="Vesicular" evidence="5">
    <location>
        <begin position="1"/>
        <end position="59"/>
    </location>
</feature>
<feature type="transmembrane region" description="Helical" evidence="5">
    <location>
        <begin position="60"/>
        <end position="80"/>
    </location>
</feature>
<feature type="topological domain" description="Cytoplasmic" evidence="5">
    <location>
        <begin position="81"/>
        <end position="511"/>
    </location>
</feature>
<feature type="domain" description="C2 1" evidence="6">
    <location>
        <begin position="230"/>
        <end position="351"/>
    </location>
</feature>
<feature type="domain" description="C2 2" evidence="6">
    <location>
        <begin position="362"/>
        <end position="495"/>
    </location>
</feature>
<feature type="region of interest" description="Cysteine motif" evidence="2">
    <location>
        <begin position="12"/>
        <end position="38"/>
    </location>
</feature>
<feature type="region of interest" description="Disordered" evidence="7">
    <location>
        <begin position="92"/>
        <end position="119"/>
    </location>
</feature>
<feature type="region of interest" description="Disordered" evidence="7">
    <location>
        <begin position="157"/>
        <end position="182"/>
    </location>
</feature>
<feature type="region of interest" description="Necessary for cell membrane association (isoform 2)" evidence="9">
    <location>
        <begin position="483"/>
        <end position="511"/>
    </location>
</feature>
<feature type="compositionally biased region" description="Low complexity" evidence="7">
    <location>
        <begin position="94"/>
        <end position="103"/>
    </location>
</feature>
<feature type="compositionally biased region" description="Polar residues" evidence="7">
    <location>
        <begin position="104"/>
        <end position="113"/>
    </location>
</feature>
<feature type="compositionally biased region" description="Polar residues" evidence="7">
    <location>
        <begin position="160"/>
        <end position="172"/>
    </location>
</feature>
<feature type="binding site" evidence="6">
    <location>
        <position position="261"/>
    </location>
    <ligand>
        <name>Ca(2+)</name>
        <dbReference type="ChEBI" id="CHEBI:29108"/>
        <label>1</label>
    </ligand>
</feature>
<feature type="binding site" evidence="6">
    <location>
        <position position="261"/>
    </location>
    <ligand>
        <name>Ca(2+)</name>
        <dbReference type="ChEBI" id="CHEBI:29108"/>
        <label>2</label>
    </ligand>
</feature>
<feature type="binding site" evidence="6">
    <location>
        <position position="267"/>
    </location>
    <ligand>
        <name>Ca(2+)</name>
        <dbReference type="ChEBI" id="CHEBI:29108"/>
        <label>1</label>
    </ligand>
</feature>
<feature type="binding site" evidence="6">
    <location>
        <position position="319"/>
    </location>
    <ligand>
        <name>Ca(2+)</name>
        <dbReference type="ChEBI" id="CHEBI:29108"/>
        <label>1</label>
    </ligand>
</feature>
<feature type="binding site" evidence="6">
    <location>
        <position position="319"/>
    </location>
    <ligand>
        <name>Ca(2+)</name>
        <dbReference type="ChEBI" id="CHEBI:29108"/>
        <label>2</label>
    </ligand>
</feature>
<feature type="binding site" evidence="6">
    <location>
        <position position="320"/>
    </location>
    <ligand>
        <name>Ca(2+)</name>
        <dbReference type="ChEBI" id="CHEBI:29108"/>
        <label>1</label>
    </ligand>
</feature>
<feature type="binding site" evidence="6">
    <location>
        <position position="321"/>
    </location>
    <ligand>
        <name>Ca(2+)</name>
        <dbReference type="ChEBI" id="CHEBI:29108"/>
        <label>1</label>
    </ligand>
</feature>
<feature type="binding site" evidence="6">
    <location>
        <position position="321"/>
    </location>
    <ligand>
        <name>Ca(2+)</name>
        <dbReference type="ChEBI" id="CHEBI:29108"/>
        <label>2</label>
    </ligand>
</feature>
<feature type="binding site" evidence="6">
    <location>
        <position position="321"/>
    </location>
    <ligand>
        <name>Ca(2+)</name>
        <dbReference type="ChEBI" id="CHEBI:29108"/>
        <label>3</label>
    </ligand>
</feature>
<feature type="binding site" evidence="6">
    <location>
        <position position="324"/>
    </location>
    <ligand>
        <name>Ca(2+)</name>
        <dbReference type="ChEBI" id="CHEBI:29108"/>
        <label>3</label>
    </ligand>
</feature>
<feature type="binding site" evidence="6">
    <location>
        <position position="327"/>
    </location>
    <ligand>
        <name>Ca(2+)</name>
        <dbReference type="ChEBI" id="CHEBI:29108"/>
        <label>2</label>
    </ligand>
</feature>
<feature type="binding site" evidence="6">
    <location>
        <position position="327"/>
    </location>
    <ligand>
        <name>Ca(2+)</name>
        <dbReference type="ChEBI" id="CHEBI:29108"/>
        <label>3</label>
    </ligand>
</feature>
<feature type="binding site" evidence="6">
    <location>
        <position position="393"/>
    </location>
    <ligand>
        <name>Ca(2+)</name>
        <dbReference type="ChEBI" id="CHEBI:29108"/>
        <label>4</label>
    </ligand>
</feature>
<feature type="binding site" evidence="6">
    <location>
        <position position="399"/>
    </location>
    <ligand>
        <name>Ca(2+)</name>
        <dbReference type="ChEBI" id="CHEBI:29108"/>
        <label>4</label>
    </ligand>
</feature>
<feature type="binding site" evidence="6">
    <location>
        <position position="453"/>
    </location>
    <ligand>
        <name>Ca(2+)</name>
        <dbReference type="ChEBI" id="CHEBI:29108"/>
        <label>4</label>
    </ligand>
</feature>
<feature type="binding site" evidence="6">
    <location>
        <position position="455"/>
    </location>
    <ligand>
        <name>Ca(2+)</name>
        <dbReference type="ChEBI" id="CHEBI:29108"/>
        <label>4</label>
    </ligand>
</feature>
<feature type="modified residue" description="Phosphoserine" evidence="4">
    <location>
        <position position="217"/>
    </location>
</feature>
<feature type="splice variant" id="VSP_041729" description="In isoform 2." evidence="12">
    <location>
        <begin position="1"/>
        <end position="85"/>
    </location>
</feature>
<feature type="sequence conflict" description="In Ref. 1; BAA85775 and 2; BAA85781/BAA85782." evidence="13" ref="1 2">
    <original>I</original>
    <variation>V</variation>
    <location>
        <position position="428"/>
    </location>
</feature>
<gene>
    <name type="primary">Syt6</name>
</gene>
<reference key="1">
    <citation type="journal article" date="1999" name="J. Biol. Chem.">
        <title>Conserved N-terminal cysteine motif is essential for homo- and heterodimer formation of synaptotagmins III, V, VI, and X.</title>
        <authorList>
            <person name="Fukuda M."/>
            <person name="Kanno E."/>
            <person name="Mikoshiba K."/>
        </authorList>
    </citation>
    <scope>NUCLEOTIDE SEQUENCE [MRNA] (ISOFORM 1)</scope>
    <scope>SUBUNIT</scope>
    <scope>DISULFIDE BOND</scope>
    <source>
        <strain>ICR</strain>
        <tissue>Cerebellum</tissue>
    </source>
</reference>
<reference key="2">
    <citation type="journal article" date="1999" name="J. Biol. Chem.">
        <title>A novel alternatively spliced variant of synaptotagmin VI lacking a transmembrane domain. Implications for distinct functions of the two isoforms.</title>
        <authorList>
            <person name="Fukuda M."/>
            <person name="Mikoshiba K."/>
        </authorList>
    </citation>
    <scope>NUCLEOTIDE SEQUENCE [MRNA] (ISOFORM 2)</scope>
    <scope>TISSUE SPECIFICITY (ISOFORMS 1 AND 2)</scope>
    <scope>SUBUNIT</scope>
    <scope>SUBCELLULAR LOCATION (ISOFORMS 1 AND 2)</scope>
    <scope>ALTERNATIVE SPLICING</scope>
    <source>
        <strain>ICR</strain>
        <tissue>Cerebellum</tissue>
    </source>
</reference>
<reference key="3">
    <citation type="journal article" date="2009" name="PLoS Biol.">
        <title>Lineage-specific biology revealed by a finished genome assembly of the mouse.</title>
        <authorList>
            <person name="Church D.M."/>
            <person name="Goodstadt L."/>
            <person name="Hillier L.W."/>
            <person name="Zody M.C."/>
            <person name="Goldstein S."/>
            <person name="She X."/>
            <person name="Bult C.J."/>
            <person name="Agarwala R."/>
            <person name="Cherry J.L."/>
            <person name="DiCuccio M."/>
            <person name="Hlavina W."/>
            <person name="Kapustin Y."/>
            <person name="Meric P."/>
            <person name="Maglott D."/>
            <person name="Birtle Z."/>
            <person name="Marques A.C."/>
            <person name="Graves T."/>
            <person name="Zhou S."/>
            <person name="Teague B."/>
            <person name="Potamousis K."/>
            <person name="Churas C."/>
            <person name="Place M."/>
            <person name="Herschleb J."/>
            <person name="Runnheim R."/>
            <person name="Forrest D."/>
            <person name="Amos-Landgraf J."/>
            <person name="Schwartz D.C."/>
            <person name="Cheng Z."/>
            <person name="Lindblad-Toh K."/>
            <person name="Eichler E.E."/>
            <person name="Ponting C.P."/>
        </authorList>
    </citation>
    <scope>NUCLEOTIDE SEQUENCE [LARGE SCALE GENOMIC DNA]</scope>
    <source>
        <strain>C57BL/6J</strain>
    </source>
</reference>
<reference key="4">
    <citation type="journal article" date="2000" name="J. Biol. Chem.">
        <title>Distinct self-oligomerization activities of synaptotagmin family. Unique calcium-dependent oligomerization properties of synaptotagmin VII.</title>
        <authorList>
            <person name="Fukuda M."/>
            <person name="Mikoshiba K."/>
        </authorList>
    </citation>
    <scope>SUBUNIT</scope>
</reference>
<reference key="5">
    <citation type="journal article" date="2005" name="J. Biol. Chem.">
        <title>Synaptotagmin VI and VIII and syntaxin 2 are essential for the mouse sperm acrosome reaction.</title>
        <authorList>
            <person name="Hutt D.M."/>
            <person name="Baltz J.M."/>
            <person name="Ngsee J.K."/>
        </authorList>
    </citation>
    <scope>FUNCTION</scope>
    <scope>INTERACTION WITH STX1A; STX1B AND STX2</scope>
</reference>
<keyword id="KW-0025">Alternative splicing</keyword>
<keyword id="KW-0106">Calcium</keyword>
<keyword id="KW-1003">Cell membrane</keyword>
<keyword id="KW-0963">Cytoplasm</keyword>
<keyword id="KW-0968">Cytoplasmic vesicle</keyword>
<keyword id="KW-1015">Disulfide bond</keyword>
<keyword id="KW-0472">Membrane</keyword>
<keyword id="KW-0479">Metal-binding</keyword>
<keyword id="KW-0597">Phosphoprotein</keyword>
<keyword id="KW-1185">Reference proteome</keyword>
<keyword id="KW-0677">Repeat</keyword>
<keyword id="KW-0770">Synapse</keyword>
<keyword id="KW-0812">Transmembrane</keyword>
<keyword id="KW-1133">Transmembrane helix</keyword>
<dbReference type="EMBL" id="AB026803">
    <property type="protein sequence ID" value="BAA85775.1"/>
    <property type="molecule type" value="mRNA"/>
</dbReference>
<dbReference type="EMBL" id="AB026809">
    <property type="protein sequence ID" value="BAA85781.1"/>
    <property type="molecule type" value="mRNA"/>
</dbReference>
<dbReference type="EMBL" id="AB026810">
    <property type="protein sequence ID" value="BAA85782.1"/>
    <property type="molecule type" value="mRNA"/>
</dbReference>
<dbReference type="EMBL" id="AC123057">
    <property type="status" value="NOT_ANNOTATED_CDS"/>
    <property type="molecule type" value="Genomic_DNA"/>
</dbReference>
<dbReference type="CCDS" id="CCDS38575.1">
    <molecule id="Q9R0N8-1"/>
</dbReference>
<dbReference type="CCDS" id="CCDS71296.1">
    <molecule id="Q9R0N8-2"/>
</dbReference>
<dbReference type="RefSeq" id="NP_001263606.1">
    <molecule id="Q9R0N8-2"/>
    <property type="nucleotide sequence ID" value="NM_001276677.3"/>
</dbReference>
<dbReference type="RefSeq" id="NP_001263608.1">
    <molecule id="Q9R0N8-2"/>
    <property type="nucleotide sequence ID" value="NM_001276679.2"/>
</dbReference>
<dbReference type="RefSeq" id="NP_001263610.1">
    <molecule id="Q9R0N8-2"/>
    <property type="nucleotide sequence ID" value="NM_001276681.2"/>
</dbReference>
<dbReference type="RefSeq" id="NP_001415746.1">
    <molecule id="Q9R0N8-2"/>
    <property type="nucleotide sequence ID" value="NM_001428817.1"/>
</dbReference>
<dbReference type="RefSeq" id="NP_001415747.1">
    <molecule id="Q9R0N8-2"/>
    <property type="nucleotide sequence ID" value="NM_001428818.1"/>
</dbReference>
<dbReference type="RefSeq" id="NP_001415748.1">
    <molecule id="Q9R0N8-2"/>
    <property type="nucleotide sequence ID" value="NM_001428819.1"/>
</dbReference>
<dbReference type="RefSeq" id="NP_061270.2">
    <molecule id="Q9R0N8-1"/>
    <property type="nucleotide sequence ID" value="NM_018800.6"/>
</dbReference>
<dbReference type="SMR" id="Q9R0N8"/>
<dbReference type="BioGRID" id="207672">
    <property type="interactions" value="4"/>
</dbReference>
<dbReference type="FunCoup" id="Q9R0N8">
    <property type="interactions" value="600"/>
</dbReference>
<dbReference type="IntAct" id="Q9R0N8">
    <property type="interactions" value="4"/>
</dbReference>
<dbReference type="MINT" id="Q9R0N8"/>
<dbReference type="STRING" id="10090.ENSMUSP00000088196"/>
<dbReference type="iPTMnet" id="Q9R0N8"/>
<dbReference type="PhosphoSitePlus" id="Q9R0N8"/>
<dbReference type="jPOST" id="Q9R0N8"/>
<dbReference type="PaxDb" id="10090-ENSMUSP00000088196"/>
<dbReference type="ProteomicsDB" id="254618">
    <molecule id="Q9R0N8-1"/>
</dbReference>
<dbReference type="ProteomicsDB" id="254619">
    <molecule id="Q9R0N8-2"/>
</dbReference>
<dbReference type="Antibodypedia" id="53758">
    <property type="antibodies" value="304 antibodies from 28 providers"/>
</dbReference>
<dbReference type="Ensembl" id="ENSMUST00000090697.11">
    <molecule id="Q9R0N8-1"/>
    <property type="protein sequence ID" value="ENSMUSP00000088196.5"/>
    <property type="gene ID" value="ENSMUSG00000027849.20"/>
</dbReference>
<dbReference type="Ensembl" id="ENSMUST00000117221.9">
    <molecule id="Q9R0N8-2"/>
    <property type="protein sequence ID" value="ENSMUSP00000113373.2"/>
    <property type="gene ID" value="ENSMUSG00000027849.20"/>
</dbReference>
<dbReference type="Ensembl" id="ENSMUST00000121834.8">
    <molecule id="Q9R0N8-1"/>
    <property type="protein sequence ID" value="ENSMUSP00000112997.2"/>
    <property type="gene ID" value="ENSMUSG00000027849.20"/>
</dbReference>
<dbReference type="GeneID" id="54524"/>
<dbReference type="KEGG" id="mmu:54524"/>
<dbReference type="UCSC" id="uc008qsy.2">
    <molecule id="Q9R0N8-1"/>
    <property type="organism name" value="mouse"/>
</dbReference>
<dbReference type="AGR" id="MGI:1859544"/>
<dbReference type="CTD" id="148281"/>
<dbReference type="MGI" id="MGI:1859544">
    <property type="gene designation" value="Syt6"/>
</dbReference>
<dbReference type="VEuPathDB" id="HostDB:ENSMUSG00000027849"/>
<dbReference type="eggNOG" id="KOG1028">
    <property type="taxonomic scope" value="Eukaryota"/>
</dbReference>
<dbReference type="GeneTree" id="ENSGT00940000157665"/>
<dbReference type="HOGENOM" id="CLU_023008_8_1_1"/>
<dbReference type="InParanoid" id="Q9R0N8"/>
<dbReference type="OMA" id="VMRVGCN"/>
<dbReference type="OrthoDB" id="67700at2759"/>
<dbReference type="PhylomeDB" id="Q9R0N8"/>
<dbReference type="TreeFam" id="TF315600"/>
<dbReference type="BioGRID-ORCS" id="54524">
    <property type="hits" value="3 hits in 77 CRISPR screens"/>
</dbReference>
<dbReference type="PRO" id="PR:Q9R0N8"/>
<dbReference type="Proteomes" id="UP000000589">
    <property type="component" value="Chromosome 3"/>
</dbReference>
<dbReference type="RNAct" id="Q9R0N8">
    <property type="molecule type" value="protein"/>
</dbReference>
<dbReference type="Bgee" id="ENSMUSG00000027849">
    <property type="expression patterns" value="Expressed in cortical layer VI and 55 other cell types or tissues"/>
</dbReference>
<dbReference type="ExpressionAtlas" id="Q9R0N8">
    <property type="expression patterns" value="baseline and differential"/>
</dbReference>
<dbReference type="GO" id="GO:0009898">
    <property type="term" value="C:cytoplasmic side of plasma membrane"/>
    <property type="evidence" value="ECO:0000314"/>
    <property type="project" value="UniProtKB"/>
</dbReference>
<dbReference type="GO" id="GO:0005829">
    <property type="term" value="C:cytosol"/>
    <property type="evidence" value="ECO:0000314"/>
    <property type="project" value="UniProtKB"/>
</dbReference>
<dbReference type="GO" id="GO:0016020">
    <property type="term" value="C:membrane"/>
    <property type="evidence" value="ECO:0000314"/>
    <property type="project" value="BHF-UCL"/>
</dbReference>
<dbReference type="GO" id="GO:0097038">
    <property type="term" value="C:perinuclear endoplasmic reticulum"/>
    <property type="evidence" value="ECO:0000314"/>
    <property type="project" value="BHF-UCL"/>
</dbReference>
<dbReference type="GO" id="GO:0005886">
    <property type="term" value="C:plasma membrane"/>
    <property type="evidence" value="ECO:0007669"/>
    <property type="project" value="UniProtKB-SubCell"/>
</dbReference>
<dbReference type="GO" id="GO:0030672">
    <property type="term" value="C:synaptic vesicle membrane"/>
    <property type="evidence" value="ECO:0007669"/>
    <property type="project" value="UniProtKB-SubCell"/>
</dbReference>
<dbReference type="GO" id="GO:0005544">
    <property type="term" value="F:calcium-dependent phospholipid binding"/>
    <property type="evidence" value="ECO:0000314"/>
    <property type="project" value="ParkinsonsUK-UCL"/>
</dbReference>
<dbReference type="GO" id="GO:0048306">
    <property type="term" value="F:calcium-dependent protein binding"/>
    <property type="evidence" value="ECO:0000353"/>
    <property type="project" value="UniProtKB"/>
</dbReference>
<dbReference type="GO" id="GO:0042802">
    <property type="term" value="F:identical protein binding"/>
    <property type="evidence" value="ECO:0000353"/>
    <property type="project" value="IntAct"/>
</dbReference>
<dbReference type="GO" id="GO:0046872">
    <property type="term" value="F:metal ion binding"/>
    <property type="evidence" value="ECO:0007669"/>
    <property type="project" value="UniProtKB-KW"/>
</dbReference>
<dbReference type="GO" id="GO:0001786">
    <property type="term" value="F:phosphatidylserine binding"/>
    <property type="evidence" value="ECO:0000314"/>
    <property type="project" value="ParkinsonsUK-UCL"/>
</dbReference>
<dbReference type="GO" id="GO:0046982">
    <property type="term" value="F:protein heterodimerization activity"/>
    <property type="evidence" value="ECO:0000353"/>
    <property type="project" value="UniProtKB"/>
</dbReference>
<dbReference type="GO" id="GO:0042803">
    <property type="term" value="F:protein homodimerization activity"/>
    <property type="evidence" value="ECO:0000314"/>
    <property type="project" value="BHF-UCL"/>
</dbReference>
<dbReference type="GO" id="GO:0007340">
    <property type="term" value="P:acrosome reaction"/>
    <property type="evidence" value="ECO:0000314"/>
    <property type="project" value="HGNC-UCL"/>
</dbReference>
<dbReference type="CDD" id="cd08385">
    <property type="entry name" value="C2A_Synaptotagmin-1-5-6-9-10"/>
    <property type="match status" value="1"/>
</dbReference>
<dbReference type="CDD" id="cd08403">
    <property type="entry name" value="C2B_Synaptotagmin-3-5-6-9-10"/>
    <property type="match status" value="1"/>
</dbReference>
<dbReference type="FunFam" id="2.60.40.150:FF:000005">
    <property type="entry name" value="Synaptotagmin 6"/>
    <property type="match status" value="1"/>
</dbReference>
<dbReference type="FunFam" id="2.60.40.150:FF:000011">
    <property type="entry name" value="Synaptotagmin 6"/>
    <property type="match status" value="1"/>
</dbReference>
<dbReference type="Gene3D" id="2.60.40.150">
    <property type="entry name" value="C2 domain"/>
    <property type="match status" value="2"/>
</dbReference>
<dbReference type="InterPro" id="IPR000008">
    <property type="entry name" value="C2_dom"/>
</dbReference>
<dbReference type="InterPro" id="IPR035892">
    <property type="entry name" value="C2_domain_sf"/>
</dbReference>
<dbReference type="InterPro" id="IPR001565">
    <property type="entry name" value="Synaptotagmin"/>
</dbReference>
<dbReference type="PANTHER" id="PTHR10024">
    <property type="entry name" value="SYNAPTOTAGMIN"/>
    <property type="match status" value="1"/>
</dbReference>
<dbReference type="PANTHER" id="PTHR10024:SF45">
    <property type="entry name" value="SYNAPTOTAGMIN-6"/>
    <property type="match status" value="1"/>
</dbReference>
<dbReference type="Pfam" id="PF00168">
    <property type="entry name" value="C2"/>
    <property type="match status" value="2"/>
</dbReference>
<dbReference type="PRINTS" id="PR00360">
    <property type="entry name" value="C2DOMAIN"/>
</dbReference>
<dbReference type="PRINTS" id="PR00399">
    <property type="entry name" value="SYNAPTOTAGMN"/>
</dbReference>
<dbReference type="SMART" id="SM00239">
    <property type="entry name" value="C2"/>
    <property type="match status" value="2"/>
</dbReference>
<dbReference type="SUPFAM" id="SSF49562">
    <property type="entry name" value="C2 domain (Calcium/lipid-binding domain, CaLB)"/>
    <property type="match status" value="2"/>
</dbReference>
<dbReference type="PROSITE" id="PS50004">
    <property type="entry name" value="C2"/>
    <property type="match status" value="2"/>
</dbReference>
<accession>Q9R0N8</accession>
<accession>E9QJV2</accession>
<accession>Q9QUK7</accession>
<protein>
    <recommendedName>
        <fullName>Synaptotagmin-6</fullName>
    </recommendedName>
    <alternativeName>
        <fullName>Synaptotagmin VI</fullName>
        <shortName>SytVI</shortName>
    </alternativeName>
</protein>
<proteinExistence type="evidence at protein level"/>
<sequence>MSGVWGAGGPRCQAALAVLASLCRARPPPLGLDVETCRSFELQSPEQSPSAADSGTSVSLLAVVVIVCGVALVAVFLFLFWKLCWMPWRKKEASSPSSANPASETLQSPSSRGNMADKLKDPSALGFLEAAVKISHTSPDIPAEVQMSVKEHIMRHTKLQRQTTEPASSTRHTSFKRHLPRQMHVSSVDYGNELPPAAAEQPTSIGRIKPELYKQKSVDGDDAKSEAAKSCGKINFSLRYDYESETLIVRILKAFDLPAKDFCGSSDPYVKIYLLPDRKCKLQTRVHRKTLNPTFDENFHFPVPYEELADRKLHLSVFDFDRFSRHDMIGEVILDNLFEASDLSRETSIWKDIQYATSESVDLGEIMFSLCYLPTAGRLTLTVIKCRNLKAMDITGYSDPYVKVSLLCDGRRLKKKKTTIKKNTLNPIYNEAIIFDIPPENMDQVSLLISVMDYDRVGHNEIIGVCRVGINAEGLGRDHWNEMLAYPRKPIAHWHSLVEVKKSFKEGTPRL</sequence>
<evidence type="ECO:0000250" key="1"/>
<evidence type="ECO:0000250" key="2">
    <source>
        <dbReference type="UniProtKB" id="O35681"/>
    </source>
</evidence>
<evidence type="ECO:0000250" key="3">
    <source>
        <dbReference type="UniProtKB" id="P40748"/>
    </source>
</evidence>
<evidence type="ECO:0000250" key="4">
    <source>
        <dbReference type="UniProtKB" id="Q5T7P8"/>
    </source>
</evidence>
<evidence type="ECO:0000255" key="5"/>
<evidence type="ECO:0000255" key="6">
    <source>
        <dbReference type="PROSITE-ProRule" id="PRU00041"/>
    </source>
</evidence>
<evidence type="ECO:0000256" key="7">
    <source>
        <dbReference type="SAM" id="MobiDB-lite"/>
    </source>
</evidence>
<evidence type="ECO:0000269" key="8">
    <source>
    </source>
</evidence>
<evidence type="ECO:0000269" key="9">
    <source>
    </source>
</evidence>
<evidence type="ECO:0000269" key="10">
    <source>
    </source>
</evidence>
<evidence type="ECO:0000269" key="11">
    <source>
    </source>
</evidence>
<evidence type="ECO:0000303" key="12">
    <source>
    </source>
</evidence>
<evidence type="ECO:0000305" key="13"/>
<organism>
    <name type="scientific">Mus musculus</name>
    <name type="common">Mouse</name>
    <dbReference type="NCBI Taxonomy" id="10090"/>
    <lineage>
        <taxon>Eukaryota</taxon>
        <taxon>Metazoa</taxon>
        <taxon>Chordata</taxon>
        <taxon>Craniata</taxon>
        <taxon>Vertebrata</taxon>
        <taxon>Euteleostomi</taxon>
        <taxon>Mammalia</taxon>
        <taxon>Eutheria</taxon>
        <taxon>Euarchontoglires</taxon>
        <taxon>Glires</taxon>
        <taxon>Rodentia</taxon>
        <taxon>Myomorpha</taxon>
        <taxon>Muroidea</taxon>
        <taxon>Muridae</taxon>
        <taxon>Murinae</taxon>
        <taxon>Mus</taxon>
        <taxon>Mus</taxon>
    </lineage>
</organism>
<name>SYT6_MOUSE</name>